<name>5HT6R_PANTR</name>
<proteinExistence type="evidence at transcript level"/>
<feature type="chain" id="PRO_0000068976" description="5-hydroxytryptamine receptor 6">
    <location>
        <begin position="1"/>
        <end position="440"/>
    </location>
</feature>
<feature type="topological domain" description="Extracellular" evidence="2">
    <location>
        <begin position="1"/>
        <end position="27"/>
    </location>
</feature>
<feature type="transmembrane region" description="Helical; Name=1" evidence="2">
    <location>
        <begin position="28"/>
        <end position="52"/>
    </location>
</feature>
<feature type="topological domain" description="Cytoplasmic" evidence="2">
    <location>
        <begin position="53"/>
        <end position="62"/>
    </location>
</feature>
<feature type="transmembrane region" description="Helical; Name=2" evidence="2">
    <location>
        <begin position="63"/>
        <end position="88"/>
    </location>
</feature>
<feature type="topological domain" description="Extracellular" evidence="2">
    <location>
        <begin position="89"/>
        <end position="96"/>
    </location>
</feature>
<feature type="transmembrane region" description="Helical; Name=3" evidence="2">
    <location>
        <begin position="97"/>
        <end position="122"/>
    </location>
</feature>
<feature type="topological domain" description="Cytoplasmic" evidence="2">
    <location>
        <begin position="123"/>
        <end position="142"/>
    </location>
</feature>
<feature type="transmembrane region" description="Helical; Name=4" evidence="2">
    <location>
        <begin position="143"/>
        <end position="167"/>
    </location>
</feature>
<feature type="topological domain" description="Extracellular" evidence="2">
    <location>
        <begin position="168"/>
        <end position="185"/>
    </location>
</feature>
<feature type="transmembrane region" description="Helical; Name=5" evidence="2">
    <location>
        <begin position="186"/>
        <end position="209"/>
    </location>
</feature>
<feature type="topological domain" description="Cytoplasmic" evidence="2">
    <location>
        <begin position="210"/>
        <end position="266"/>
    </location>
</feature>
<feature type="transmembrane region" description="Helical; Name=6" evidence="2">
    <location>
        <begin position="267"/>
        <end position="293"/>
    </location>
</feature>
<feature type="topological domain" description="Extracellular" evidence="2">
    <location>
        <begin position="294"/>
        <end position="299"/>
    </location>
</feature>
<feature type="transmembrane region" description="Helical; Name=7" evidence="2">
    <location>
        <begin position="300"/>
        <end position="323"/>
    </location>
</feature>
<feature type="topological domain" description="Cytoplasmic" evidence="2">
    <location>
        <begin position="324"/>
        <end position="440"/>
    </location>
</feature>
<feature type="region of interest" description="Disordered" evidence="7">
    <location>
        <begin position="346"/>
        <end position="392"/>
    </location>
</feature>
<feature type="compositionally biased region" description="Polar residues" evidence="7">
    <location>
        <begin position="347"/>
        <end position="358"/>
    </location>
</feature>
<feature type="compositionally biased region" description="Low complexity" evidence="7">
    <location>
        <begin position="362"/>
        <end position="371"/>
    </location>
</feature>
<feature type="binding site" evidence="2">
    <location>
        <position position="106"/>
    </location>
    <ligand>
        <name>serotonin</name>
        <dbReference type="ChEBI" id="CHEBI:350546"/>
    </ligand>
</feature>
<feature type="binding site" evidence="2">
    <location>
        <position position="288"/>
    </location>
    <ligand>
        <name>serotonin</name>
        <dbReference type="ChEBI" id="CHEBI:350546"/>
    </ligand>
</feature>
<feature type="disulfide bond" evidence="6">
    <location>
        <begin position="99"/>
        <end position="180"/>
    </location>
</feature>
<sequence>MVPEPGPSANSTPAWGAGPPSAPGGSGWVAAALCVVIALTAAANSLLIALICTQPALRNTSNFFLVSLFTSDLMVGLVVMPPAMLNALYGRWVLARGLCLLWTAFDVMCCSASILNLCLISLDRYLLILSPLRYKLRMTPPRALALVLGAWSLAALASFLPLLLGWHELGHARPPVPGQCRLLASLPFVLVASGLTFFLPSGAICFTYCRILLAARKQAVQVASLTTGMASQASETLQVPRTPRPGVESADSRRLATKHSRKALKASLTLGILLGMFFVTWLPFFVANIVQAVCDCISPGLFDVLTWLGYCNSTMNPIIYPLFMRDFKRALGRFLPCPRCPRERQASLASPSLRTSHSGPRPGLSLQQVLPLPLPPDSDSDSDAGSGGSSGLRLTAQLLLPGEATRDPPLPTRAAAAVNFFNIDPAEPELRPHPLGIPTN</sequence>
<protein>
    <recommendedName>
        <fullName>5-hydroxytryptamine receptor 6</fullName>
        <shortName>5-HT-6</shortName>
        <shortName>5-HT6</shortName>
    </recommendedName>
    <alternativeName>
        <fullName>Serotonin receptor 6</fullName>
    </alternativeName>
</protein>
<gene>
    <name type="primary">HTR6</name>
</gene>
<accession>Q5IS65</accession>
<keyword id="KW-1003">Cell membrane</keyword>
<keyword id="KW-1015">Disulfide bond</keyword>
<keyword id="KW-0297">G-protein coupled receptor</keyword>
<keyword id="KW-0472">Membrane</keyword>
<keyword id="KW-0675">Receptor</keyword>
<keyword id="KW-1185">Reference proteome</keyword>
<keyword id="KW-0807">Transducer</keyword>
<keyword id="KW-0812">Transmembrane</keyword>
<keyword id="KW-1133">Transmembrane helix</keyword>
<evidence type="ECO:0000250" key="1">
    <source>
        <dbReference type="UniProtKB" id="P31388"/>
    </source>
</evidence>
<evidence type="ECO:0000250" key="2">
    <source>
        <dbReference type="UniProtKB" id="P50406"/>
    </source>
</evidence>
<evidence type="ECO:0000250" key="3">
    <source>
        <dbReference type="UniProtKB" id="Q13639"/>
    </source>
</evidence>
<evidence type="ECO:0000250" key="4">
    <source>
        <dbReference type="UniProtKB" id="Q9R1C8"/>
    </source>
</evidence>
<evidence type="ECO:0000255" key="5"/>
<evidence type="ECO:0000255" key="6">
    <source>
        <dbReference type="PROSITE-ProRule" id="PRU00521"/>
    </source>
</evidence>
<evidence type="ECO:0000256" key="7">
    <source>
        <dbReference type="SAM" id="MobiDB-lite"/>
    </source>
</evidence>
<comment type="function">
    <text evidence="1 2 4">G-protein coupled receptor for 5-hydroxytryptamine (serotonin), a biogenic hormone that functions as a neurotransmitter, a hormone and a mitogen (By similarity). Also has a high affinity for tricyclic psychotropic drugs (By similarity). Ligand binding causes a conformation change that triggers signaling via guanine nucleotide-binding proteins (G proteins) and modulates the activity of downstream effectors. HTR6 is coupled to G(s) G alpha proteins and mediates activation of adenylate cyclase activity (By similarity). Controls pyramidal neurons migration during corticogenesis, through the regulation of CDK5 activity (By similarity). Is an activator of mTOR signaling (By similarity).</text>
</comment>
<comment type="subunit">
    <text evidence="2 4">Interacts with MTOR, RPTOR and NF1 (By similarity). Interacts with CDK5 (By similarity).</text>
</comment>
<comment type="subcellular location">
    <subcellularLocation>
        <location evidence="2">Cell membrane</location>
        <topology evidence="5">Multi-pass membrane protein</topology>
    </subcellularLocation>
</comment>
<comment type="domain">
    <text evidence="3">Specificity for G(s) G alpha proteins is determined by the length of transmembrane regions 5 and 6 (TM5 and TM6).</text>
</comment>
<comment type="similarity">
    <text evidence="6">Belongs to the G-protein coupled receptor 1 family.</text>
</comment>
<dbReference type="EMBL" id="AY665263">
    <property type="protein sequence ID" value="AAV74301.1"/>
    <property type="molecule type" value="mRNA"/>
</dbReference>
<dbReference type="RefSeq" id="NP_001029264.1">
    <property type="nucleotide sequence ID" value="NM_001034092.1"/>
</dbReference>
<dbReference type="SMR" id="Q5IS65"/>
<dbReference type="FunCoup" id="Q5IS65">
    <property type="interactions" value="1030"/>
</dbReference>
<dbReference type="STRING" id="9598.ENSPTRP00000000474"/>
<dbReference type="PaxDb" id="9598-ENSPTRP00000000474"/>
<dbReference type="Ensembl" id="ENSPTRT00000000546.2">
    <property type="protein sequence ID" value="ENSPTRP00000000474.1"/>
    <property type="gene ID" value="ENSPTRG00000000271.2"/>
</dbReference>
<dbReference type="GeneID" id="469199"/>
<dbReference type="KEGG" id="ptr:469199"/>
<dbReference type="CTD" id="3362"/>
<dbReference type="VGNC" id="VGNC:8052">
    <property type="gene designation" value="HTR6"/>
</dbReference>
<dbReference type="eggNOG" id="KOG3656">
    <property type="taxonomic scope" value="Eukaryota"/>
</dbReference>
<dbReference type="GeneTree" id="ENSGT01010000222287"/>
<dbReference type="HOGENOM" id="CLU_009579_11_0_1"/>
<dbReference type="InParanoid" id="Q5IS65"/>
<dbReference type="OMA" id="KMGWHEL"/>
<dbReference type="OrthoDB" id="14266at9604"/>
<dbReference type="TreeFam" id="TF351753"/>
<dbReference type="Proteomes" id="UP000002277">
    <property type="component" value="Chromosome 1"/>
</dbReference>
<dbReference type="Bgee" id="ENSPTRG00000000271">
    <property type="expression patterns" value="Expressed in dorsolateral prefrontal cortex and 3 other cell types or tissues"/>
</dbReference>
<dbReference type="GO" id="GO:0005929">
    <property type="term" value="C:cilium"/>
    <property type="evidence" value="ECO:0007669"/>
    <property type="project" value="Ensembl"/>
</dbReference>
<dbReference type="GO" id="GO:0030425">
    <property type="term" value="C:dendrite"/>
    <property type="evidence" value="ECO:0000318"/>
    <property type="project" value="GO_Central"/>
</dbReference>
<dbReference type="GO" id="GO:0005886">
    <property type="term" value="C:plasma membrane"/>
    <property type="evidence" value="ECO:0000250"/>
    <property type="project" value="UniProtKB"/>
</dbReference>
<dbReference type="GO" id="GO:0045202">
    <property type="term" value="C:synapse"/>
    <property type="evidence" value="ECO:0007669"/>
    <property type="project" value="GOC"/>
</dbReference>
<dbReference type="GO" id="GO:0004993">
    <property type="term" value="F:G protein-coupled serotonin receptor activity"/>
    <property type="evidence" value="ECO:0000250"/>
    <property type="project" value="UniProtKB"/>
</dbReference>
<dbReference type="GO" id="GO:0030594">
    <property type="term" value="F:neurotransmitter receptor activity"/>
    <property type="evidence" value="ECO:0000318"/>
    <property type="project" value="GO_Central"/>
</dbReference>
<dbReference type="GO" id="GO:0099589">
    <property type="term" value="F:serotonin receptor activity"/>
    <property type="evidence" value="ECO:0007669"/>
    <property type="project" value="Ensembl"/>
</dbReference>
<dbReference type="GO" id="GO:0007192">
    <property type="term" value="P:adenylate cyclase-activating serotonin receptor signaling pathway"/>
    <property type="evidence" value="ECO:0000250"/>
    <property type="project" value="UniProtKB"/>
</dbReference>
<dbReference type="GO" id="GO:0007188">
    <property type="term" value="P:adenylate cyclase-modulating G protein-coupled receptor signaling pathway"/>
    <property type="evidence" value="ECO:0000318"/>
    <property type="project" value="GO_Central"/>
</dbReference>
<dbReference type="GO" id="GO:0021795">
    <property type="term" value="P:cerebral cortex cell migration"/>
    <property type="evidence" value="ECO:0000250"/>
    <property type="project" value="UniProtKB"/>
</dbReference>
<dbReference type="GO" id="GO:0007268">
    <property type="term" value="P:chemical synaptic transmission"/>
    <property type="evidence" value="ECO:0000318"/>
    <property type="project" value="GO_Central"/>
</dbReference>
<dbReference type="GO" id="GO:0007187">
    <property type="term" value="P:G protein-coupled receptor signaling pathway, coupled to cyclic nucleotide second messenger"/>
    <property type="evidence" value="ECO:0000318"/>
    <property type="project" value="GO_Central"/>
</dbReference>
<dbReference type="GO" id="GO:0032008">
    <property type="term" value="P:positive regulation of TOR signaling"/>
    <property type="evidence" value="ECO:0000250"/>
    <property type="project" value="UniProtKB"/>
</dbReference>
<dbReference type="CDD" id="cd15054">
    <property type="entry name" value="7tmA_5-HT6"/>
    <property type="match status" value="1"/>
</dbReference>
<dbReference type="FunFam" id="1.20.1070.10:FF:000148">
    <property type="entry name" value="5-hydroxytryptamine receptor 6"/>
    <property type="match status" value="1"/>
</dbReference>
<dbReference type="Gene3D" id="1.20.1070.10">
    <property type="entry name" value="Rhodopsin 7-helix transmembrane proteins"/>
    <property type="match status" value="1"/>
</dbReference>
<dbReference type="InterPro" id="IPR002232">
    <property type="entry name" value="5HT6_rcpt"/>
</dbReference>
<dbReference type="InterPro" id="IPR000276">
    <property type="entry name" value="GPCR_Rhodpsn"/>
</dbReference>
<dbReference type="InterPro" id="IPR017452">
    <property type="entry name" value="GPCR_Rhodpsn_7TM"/>
</dbReference>
<dbReference type="PANTHER" id="PTHR24247">
    <property type="entry name" value="5-HYDROXYTRYPTAMINE RECEPTOR"/>
    <property type="match status" value="1"/>
</dbReference>
<dbReference type="PANTHER" id="PTHR24247:SF236">
    <property type="entry name" value="5-HYDROXYTRYPTAMINE RECEPTOR 6"/>
    <property type="match status" value="1"/>
</dbReference>
<dbReference type="Pfam" id="PF00001">
    <property type="entry name" value="7tm_1"/>
    <property type="match status" value="1"/>
</dbReference>
<dbReference type="PRINTS" id="PR01102">
    <property type="entry name" value="5HT6RECEPTR"/>
</dbReference>
<dbReference type="PRINTS" id="PR00237">
    <property type="entry name" value="GPCRRHODOPSN"/>
</dbReference>
<dbReference type="SMART" id="SM01381">
    <property type="entry name" value="7TM_GPCR_Srsx"/>
    <property type="match status" value="1"/>
</dbReference>
<dbReference type="SUPFAM" id="SSF81321">
    <property type="entry name" value="Family A G protein-coupled receptor-like"/>
    <property type="match status" value="1"/>
</dbReference>
<dbReference type="PROSITE" id="PS00237">
    <property type="entry name" value="G_PROTEIN_RECEP_F1_1"/>
    <property type="match status" value="1"/>
</dbReference>
<dbReference type="PROSITE" id="PS50262">
    <property type="entry name" value="G_PROTEIN_RECEP_F1_2"/>
    <property type="match status" value="1"/>
</dbReference>
<organism>
    <name type="scientific">Pan troglodytes</name>
    <name type="common">Chimpanzee</name>
    <dbReference type="NCBI Taxonomy" id="9598"/>
    <lineage>
        <taxon>Eukaryota</taxon>
        <taxon>Metazoa</taxon>
        <taxon>Chordata</taxon>
        <taxon>Craniata</taxon>
        <taxon>Vertebrata</taxon>
        <taxon>Euteleostomi</taxon>
        <taxon>Mammalia</taxon>
        <taxon>Eutheria</taxon>
        <taxon>Euarchontoglires</taxon>
        <taxon>Primates</taxon>
        <taxon>Haplorrhini</taxon>
        <taxon>Catarrhini</taxon>
        <taxon>Hominidae</taxon>
        <taxon>Pan</taxon>
    </lineage>
</organism>
<reference key="1">
    <citation type="journal article" date="2004" name="Cell">
        <title>Accelerated evolution of nervous system genes in the origin of Homo sapiens.</title>
        <authorList>
            <person name="Dorus S."/>
            <person name="Vallender E.J."/>
            <person name="Evans P.D."/>
            <person name="Anderson J.R."/>
            <person name="Gilbert S.L."/>
            <person name="Mahowald M."/>
            <person name="Wyckoff G.J."/>
            <person name="Malcom C.M."/>
            <person name="Lahn B.T."/>
        </authorList>
    </citation>
    <scope>NUCLEOTIDE SEQUENCE [MRNA]</scope>
</reference>